<protein>
    <recommendedName>
        <fullName evidence="2">Large ribosomal subunit protein bL27</fullName>
    </recommendedName>
    <alternativeName>
        <fullName>50S ribosomal protein L27</fullName>
    </alternativeName>
</protein>
<sequence>MAHKKGASSTRNGRDSNAQRLGVKRFGGQAVNAGEILVRQRGTHFHPGTGVGRGGDDTLFALAAGAVQFGTHRGRKVVNIVPLAV</sequence>
<reference key="1">
    <citation type="journal article" date="1997" name="J. Bacteriol.">
        <title>Molecular cloning and characterization of the obg gene of Streptomyces griseus in relation to the onset of morphological differentiation.</title>
        <authorList>
            <person name="Okamoto S."/>
            <person name="Itoh M."/>
            <person name="Ochi K."/>
        </authorList>
    </citation>
    <scope>NUCLEOTIDE SEQUENCE [GENOMIC DNA]</scope>
    <source>
        <strain>ATCC 11984 / NBRC 13189 / SL-842</strain>
    </source>
</reference>
<name>RL27_STRGR</name>
<organism>
    <name type="scientific">Streptomyces griseus</name>
    <dbReference type="NCBI Taxonomy" id="1911"/>
    <lineage>
        <taxon>Bacteria</taxon>
        <taxon>Bacillati</taxon>
        <taxon>Actinomycetota</taxon>
        <taxon>Actinomycetes</taxon>
        <taxon>Kitasatosporales</taxon>
        <taxon>Streptomycetaceae</taxon>
        <taxon>Streptomyces</taxon>
    </lineage>
</organism>
<gene>
    <name type="primary">rpmA</name>
</gene>
<dbReference type="EMBL" id="D87916">
    <property type="protein sequence ID" value="BAA13500.1"/>
    <property type="molecule type" value="Genomic_DNA"/>
</dbReference>
<dbReference type="RefSeq" id="WP_003969205.1">
    <property type="nucleotide sequence ID" value="NZ_UAVD01000011.1"/>
</dbReference>
<dbReference type="SMR" id="P95757"/>
<dbReference type="STRING" id="1911.GCA_001715295_04041"/>
<dbReference type="OMA" id="GKDHTLH"/>
<dbReference type="OrthoDB" id="9803474at2"/>
<dbReference type="GO" id="GO:0022625">
    <property type="term" value="C:cytosolic large ribosomal subunit"/>
    <property type="evidence" value="ECO:0007669"/>
    <property type="project" value="TreeGrafter"/>
</dbReference>
<dbReference type="GO" id="GO:0003735">
    <property type="term" value="F:structural constituent of ribosome"/>
    <property type="evidence" value="ECO:0007669"/>
    <property type="project" value="InterPro"/>
</dbReference>
<dbReference type="GO" id="GO:0006412">
    <property type="term" value="P:translation"/>
    <property type="evidence" value="ECO:0007669"/>
    <property type="project" value="UniProtKB-UniRule"/>
</dbReference>
<dbReference type="FunFam" id="2.40.50.100:FF:000020">
    <property type="entry name" value="50S ribosomal protein L27"/>
    <property type="match status" value="1"/>
</dbReference>
<dbReference type="Gene3D" id="2.40.50.100">
    <property type="match status" value="1"/>
</dbReference>
<dbReference type="HAMAP" id="MF_00539">
    <property type="entry name" value="Ribosomal_bL27"/>
    <property type="match status" value="1"/>
</dbReference>
<dbReference type="InterPro" id="IPR001684">
    <property type="entry name" value="Ribosomal_bL27"/>
</dbReference>
<dbReference type="InterPro" id="IPR018261">
    <property type="entry name" value="Ribosomal_bL27_CS"/>
</dbReference>
<dbReference type="NCBIfam" id="TIGR00062">
    <property type="entry name" value="L27"/>
    <property type="match status" value="1"/>
</dbReference>
<dbReference type="PANTHER" id="PTHR15893:SF0">
    <property type="entry name" value="LARGE RIBOSOMAL SUBUNIT PROTEIN BL27M"/>
    <property type="match status" value="1"/>
</dbReference>
<dbReference type="PANTHER" id="PTHR15893">
    <property type="entry name" value="RIBOSOMAL PROTEIN L27"/>
    <property type="match status" value="1"/>
</dbReference>
<dbReference type="Pfam" id="PF01016">
    <property type="entry name" value="Ribosomal_L27"/>
    <property type="match status" value="1"/>
</dbReference>
<dbReference type="PRINTS" id="PR00063">
    <property type="entry name" value="RIBOSOMALL27"/>
</dbReference>
<dbReference type="SUPFAM" id="SSF110324">
    <property type="entry name" value="Ribosomal L27 protein-like"/>
    <property type="match status" value="1"/>
</dbReference>
<dbReference type="PROSITE" id="PS00831">
    <property type="entry name" value="RIBOSOMAL_L27"/>
    <property type="match status" value="1"/>
</dbReference>
<proteinExistence type="inferred from homology"/>
<comment type="similarity">
    <text evidence="2">Belongs to the bacterial ribosomal protein bL27 family.</text>
</comment>
<keyword id="KW-0687">Ribonucleoprotein</keyword>
<keyword id="KW-0689">Ribosomal protein</keyword>
<evidence type="ECO:0000256" key="1">
    <source>
        <dbReference type="SAM" id="MobiDB-lite"/>
    </source>
</evidence>
<evidence type="ECO:0000305" key="2"/>
<accession>P95757</accession>
<feature type="chain" id="PRO_0000181176" description="Large ribosomal subunit protein bL27">
    <location>
        <begin position="1"/>
        <end position="85"/>
    </location>
</feature>
<feature type="region of interest" description="Disordered" evidence="1">
    <location>
        <begin position="1"/>
        <end position="22"/>
    </location>
</feature>
<feature type="compositionally biased region" description="Polar residues" evidence="1">
    <location>
        <begin position="7"/>
        <end position="19"/>
    </location>
</feature>